<gene>
    <name type="ORF">K ORF A</name>
</gene>
<dbReference type="EMBL" id="M35027">
    <property type="protein sequence ID" value="AAA48007.1"/>
    <property type="molecule type" value="Genomic_DNA"/>
</dbReference>
<dbReference type="PIR" id="G42505">
    <property type="entry name" value="G42505"/>
</dbReference>
<dbReference type="Proteomes" id="UP000008269">
    <property type="component" value="Segment"/>
</dbReference>
<proteinExistence type="predicted"/>
<name>YVKA_VACCC</name>
<keyword id="KW-1185">Reference proteome</keyword>
<organism>
    <name type="scientific">Vaccinia virus (strain Copenhagen)</name>
    <name type="common">VACV</name>
    <dbReference type="NCBI Taxonomy" id="10249"/>
    <lineage>
        <taxon>Viruses</taxon>
        <taxon>Varidnaviria</taxon>
        <taxon>Bamfordvirae</taxon>
        <taxon>Nucleocytoviricota</taxon>
        <taxon>Pokkesviricetes</taxon>
        <taxon>Chitovirales</taxon>
        <taxon>Poxviridae</taxon>
        <taxon>Chordopoxvirinae</taxon>
        <taxon>Orthopoxvirus</taxon>
        <taxon>Vaccinia virus</taxon>
    </lineage>
</organism>
<reference key="1">
    <citation type="journal article" date="1990" name="Virology">
        <title>The complete DNA sequence of vaccinia virus.</title>
        <authorList>
            <person name="Goebel S.J."/>
            <person name="Johnson G.P."/>
            <person name="Perkus M.E."/>
            <person name="Davis S.W."/>
            <person name="Winslow J.P."/>
            <person name="Paoletti E."/>
        </authorList>
    </citation>
    <scope>NUCLEOTIDE SEQUENCE [LARGE SCALE GENOMIC DNA]</scope>
</reference>
<reference key="2">
    <citation type="journal article" date="1990" name="Virology">
        <title>Appendix to 'The complete DNA sequence of vaccinia virus'.</title>
        <authorList>
            <person name="Goebel S.J."/>
            <person name="Johnson G.P."/>
            <person name="Perkus M.E."/>
            <person name="Davis S.W."/>
            <person name="Winslow J.P."/>
            <person name="Paoletti E."/>
        </authorList>
    </citation>
    <scope>COMPLETE GENOME</scope>
</reference>
<feature type="chain" id="PRO_0000099721" description="Uncharacterized 9.4 kDa protein">
    <location>
        <begin position="1"/>
        <end position="81"/>
    </location>
</feature>
<accession>P20569</accession>
<organismHost>
    <name type="scientific">Homo sapiens</name>
    <name type="common">Human</name>
    <dbReference type="NCBI Taxonomy" id="9606"/>
</organismHost>
<sequence length="81" mass="9386">MGHIITYCQVHTNISILIRKAHHIIFFVIDCDCISLQFSNYVHHGNRFRTVLISKTSIACFSDIKRILPCTFKIYSINDCP</sequence>
<protein>
    <recommendedName>
        <fullName>Uncharacterized 9.4 kDa protein</fullName>
    </recommendedName>
</protein>